<gene>
    <name evidence="3" type="primary">SPMIP1</name>
    <name type="synonym">ATP6V1FNB</name>
</gene>
<accession>A0A1B0GUX0</accession>
<organism>
    <name type="scientific">Homo sapiens</name>
    <name type="common">Human</name>
    <dbReference type="NCBI Taxonomy" id="9606"/>
    <lineage>
        <taxon>Eukaryota</taxon>
        <taxon>Metazoa</taxon>
        <taxon>Chordata</taxon>
        <taxon>Craniata</taxon>
        <taxon>Vertebrata</taxon>
        <taxon>Euteleostomi</taxon>
        <taxon>Mammalia</taxon>
        <taxon>Eutheria</taxon>
        <taxon>Euarchontoglires</taxon>
        <taxon>Primates</taxon>
        <taxon>Haplorrhini</taxon>
        <taxon>Catarrhini</taxon>
        <taxon>Hominidae</taxon>
        <taxon>Homo</taxon>
    </lineage>
</organism>
<reference key="1">
    <citation type="journal article" date="2003" name="Nature">
        <title>The DNA sequence of human chromosome 7.</title>
        <authorList>
            <person name="Hillier L.W."/>
            <person name="Fulton R.S."/>
            <person name="Fulton L.A."/>
            <person name="Graves T.A."/>
            <person name="Pepin K.H."/>
            <person name="Wagner-McPherson C."/>
            <person name="Layman D."/>
            <person name="Maas J."/>
            <person name="Jaeger S."/>
            <person name="Walker R."/>
            <person name="Wylie K."/>
            <person name="Sekhon M."/>
            <person name="Becker M.C."/>
            <person name="O'Laughlin M.D."/>
            <person name="Schaller M.E."/>
            <person name="Fewell G.A."/>
            <person name="Delehaunty K.D."/>
            <person name="Miner T.L."/>
            <person name="Nash W.E."/>
            <person name="Cordes M."/>
            <person name="Du H."/>
            <person name="Sun H."/>
            <person name="Edwards J."/>
            <person name="Bradshaw-Cordum H."/>
            <person name="Ali J."/>
            <person name="Andrews S."/>
            <person name="Isak A."/>
            <person name="Vanbrunt A."/>
            <person name="Nguyen C."/>
            <person name="Du F."/>
            <person name="Lamar B."/>
            <person name="Courtney L."/>
            <person name="Kalicki J."/>
            <person name="Ozersky P."/>
            <person name="Bielicki L."/>
            <person name="Scott K."/>
            <person name="Holmes A."/>
            <person name="Harkins R."/>
            <person name="Harris A."/>
            <person name="Strong C.M."/>
            <person name="Hou S."/>
            <person name="Tomlinson C."/>
            <person name="Dauphin-Kohlberg S."/>
            <person name="Kozlowicz-Reilly A."/>
            <person name="Leonard S."/>
            <person name="Rohlfing T."/>
            <person name="Rock S.M."/>
            <person name="Tin-Wollam A.-M."/>
            <person name="Abbott A."/>
            <person name="Minx P."/>
            <person name="Maupin R."/>
            <person name="Strowmatt C."/>
            <person name="Latreille P."/>
            <person name="Miller N."/>
            <person name="Johnson D."/>
            <person name="Murray J."/>
            <person name="Woessner J.P."/>
            <person name="Wendl M.C."/>
            <person name="Yang S.-P."/>
            <person name="Schultz B.R."/>
            <person name="Wallis J.W."/>
            <person name="Spieth J."/>
            <person name="Bieri T.A."/>
            <person name="Nelson J.O."/>
            <person name="Berkowicz N."/>
            <person name="Wohldmann P.E."/>
            <person name="Cook L.L."/>
            <person name="Hickenbotham M.T."/>
            <person name="Eldred J."/>
            <person name="Williams D."/>
            <person name="Bedell J.A."/>
            <person name="Mardis E.R."/>
            <person name="Clifton S.W."/>
            <person name="Chissoe S.L."/>
            <person name="Marra M.A."/>
            <person name="Raymond C."/>
            <person name="Haugen E."/>
            <person name="Gillett W."/>
            <person name="Zhou Y."/>
            <person name="James R."/>
            <person name="Phelps K."/>
            <person name="Iadanoto S."/>
            <person name="Bubb K."/>
            <person name="Simms E."/>
            <person name="Levy R."/>
            <person name="Clendenning J."/>
            <person name="Kaul R."/>
            <person name="Kent W.J."/>
            <person name="Furey T.S."/>
            <person name="Baertsch R.A."/>
            <person name="Brent M.R."/>
            <person name="Keibler E."/>
            <person name="Flicek P."/>
            <person name="Bork P."/>
            <person name="Suyama M."/>
            <person name="Bailey J.A."/>
            <person name="Portnoy M.E."/>
            <person name="Torrents D."/>
            <person name="Chinwalla A.T."/>
            <person name="Gish W.R."/>
            <person name="Eddy S.R."/>
            <person name="McPherson J.D."/>
            <person name="Olson M.V."/>
            <person name="Eichler E.E."/>
            <person name="Green E.D."/>
            <person name="Waterston R.H."/>
            <person name="Wilson R.K."/>
        </authorList>
    </citation>
    <scope>NUCLEOTIDE SEQUENCE [LARGE SCALE GENOMIC DNA]</scope>
</reference>
<protein>
    <recommendedName>
        <fullName evidence="2">Protein SPMIP1</fullName>
    </recommendedName>
    <alternativeName>
        <fullName evidence="2">ATP6V1F neighbor gene protein</fullName>
    </alternativeName>
    <alternativeName>
        <fullName evidence="2">Protein ATP6V1FNB</fullName>
    </alternativeName>
    <alternativeName>
        <fullName evidence="3">Sperm-associated microtubule inner protein 1</fullName>
    </alternativeName>
</protein>
<sequence>MSRQLNIDALRQNFWKEEYLREKMLRCEWYRKYGSMVKAKQKAKAAARLPLKLPTLHPKAPLSPPPAPKSAPSKVPSPVPEAPFQSEMYPVPPITRALLYEGISHDFQGRYRYLNTRKLDMPETRYLFPITTSFTYGWQLGPPVKQELVSCKMCRIESFFRKNGAFALLDPRDLAL</sequence>
<name>SMIP1_HUMAN</name>
<feature type="chain" id="PRO_0000444981" description="Protein SPMIP1">
    <location>
        <begin position="1"/>
        <end position="176"/>
    </location>
</feature>
<feature type="region of interest" description="Disordered" evidence="1">
    <location>
        <begin position="55"/>
        <end position="80"/>
    </location>
</feature>
<feature type="compositionally biased region" description="Pro residues" evidence="1">
    <location>
        <begin position="61"/>
        <end position="80"/>
    </location>
</feature>
<dbReference type="EMBL" id="AC025594">
    <property type="status" value="NOT_ANNOTATED_CDS"/>
    <property type="molecule type" value="Genomic_DNA"/>
</dbReference>
<dbReference type="CCDS" id="CCDS83222.1"/>
<dbReference type="RefSeq" id="NP_001182079.1">
    <property type="nucleotide sequence ID" value="NM_001195150.3"/>
</dbReference>
<dbReference type="SMR" id="A0A1B0GUX0"/>
<dbReference type="STRING" id="9606.ENSP00000490280"/>
<dbReference type="PhosphoSitePlus" id="A0A1B0GUX0"/>
<dbReference type="BioMuta" id="ENSG00000272899"/>
<dbReference type="MassIVE" id="A0A1B0GUX0"/>
<dbReference type="PeptideAtlas" id="A0A1B0GUX0"/>
<dbReference type="DNASU" id="100130705"/>
<dbReference type="Ensembl" id="ENST00000609480.4">
    <property type="protein sequence ID" value="ENSP00000490280.1"/>
    <property type="gene ID" value="ENSG00000272899.4"/>
</dbReference>
<dbReference type="GeneID" id="100130705"/>
<dbReference type="KEGG" id="hsa:100130705"/>
<dbReference type="MANE-Select" id="ENST00000609480.4">
    <property type="protein sequence ID" value="ENSP00000490280.1"/>
    <property type="RefSeq nucleotide sequence ID" value="NM_001195150.3"/>
    <property type="RefSeq protein sequence ID" value="NP_001182079.1"/>
</dbReference>
<dbReference type="AGR" id="HGNC:52392"/>
<dbReference type="CTD" id="100130705"/>
<dbReference type="GeneCards" id="SPMIP1"/>
<dbReference type="HGNC" id="HGNC:52392">
    <property type="gene designation" value="SPMIP1"/>
</dbReference>
<dbReference type="HPA" id="ENSG00000272899">
    <property type="expression patterns" value="Tissue enhanced (brain, kidney)"/>
</dbReference>
<dbReference type="neXtProt" id="NX_A0A1B0GUX0"/>
<dbReference type="OpenTargets" id="ENSG00000272899"/>
<dbReference type="VEuPathDB" id="HostDB:ENSG00000272899"/>
<dbReference type="GeneTree" id="ENSGT00390000003224"/>
<dbReference type="InParanoid" id="A0A1B0GUX0"/>
<dbReference type="OMA" id="QRQNFWK"/>
<dbReference type="OrthoDB" id="410807at2759"/>
<dbReference type="PAN-GO" id="A0A1B0GUX0">
    <property type="GO annotations" value="0 GO annotations based on evolutionary models"/>
</dbReference>
<dbReference type="PathwayCommons" id="A0A1B0GUX0"/>
<dbReference type="BioGRID-ORCS" id="100130705">
    <property type="hits" value="6 hits in 206 CRISPR screens"/>
</dbReference>
<dbReference type="ChiTaRS" id="ATP6V1FNB">
    <property type="organism name" value="human"/>
</dbReference>
<dbReference type="Pharos" id="A0A1B0GUX0">
    <property type="development level" value="Tdark"/>
</dbReference>
<dbReference type="PRO" id="PR:A0A1B0GUX0"/>
<dbReference type="Proteomes" id="UP000005640">
    <property type="component" value="Chromosome 7"/>
</dbReference>
<dbReference type="RNAct" id="A0A1B0GUX0">
    <property type="molecule type" value="protein"/>
</dbReference>
<dbReference type="Bgee" id="ENSG00000272899">
    <property type="expression patterns" value="Expressed in right hemisphere of cerebellum and 105 other cell types or tissues"/>
</dbReference>
<dbReference type="InterPro" id="IPR054323">
    <property type="entry name" value="SPMIP1_C"/>
</dbReference>
<dbReference type="PANTHER" id="PTHR35826:SF2">
    <property type="entry name" value="PROTEIN ATP6V1FNB"/>
    <property type="match status" value="1"/>
</dbReference>
<dbReference type="PANTHER" id="PTHR35826">
    <property type="entry name" value="PROTEIN ATP6V1FNB-LIKE"/>
    <property type="match status" value="1"/>
</dbReference>
<dbReference type="Pfam" id="PF22589">
    <property type="entry name" value="SPMIP1"/>
    <property type="match status" value="1"/>
</dbReference>
<keyword id="KW-1267">Proteomics identification</keyword>
<keyword id="KW-1185">Reference proteome</keyword>
<proteinExistence type="evidence at protein level"/>
<evidence type="ECO:0000256" key="1">
    <source>
        <dbReference type="SAM" id="MobiDB-lite"/>
    </source>
</evidence>
<evidence type="ECO:0000305" key="2"/>
<evidence type="ECO:0000312" key="3">
    <source>
        <dbReference type="HGNC" id="HGNC:52392"/>
    </source>
</evidence>